<proteinExistence type="evidence at protein level"/>
<protein>
    <recommendedName>
        <fullName>Aldo-keto reductase family 1 member A1</fullName>
        <ecNumber evidence="5 7 9">1.1.1.2</ecNumber>
        <ecNumber evidence="5">1.1.1.372</ecNumber>
        <ecNumber evidence="6">1.1.1.54</ecNumber>
    </recommendedName>
    <alternativeName>
        <fullName evidence="13">3-DG-reducing enzyme</fullName>
    </alternativeName>
    <alternativeName>
        <fullName>Alcohol dehydrogenase [NADP(+)]</fullName>
    </alternativeName>
    <alternativeName>
        <fullName evidence="12">Aldehyde reductase</fullName>
    </alternativeName>
    <alternativeName>
        <fullName evidence="11">Glucuronate reductase</fullName>
        <ecNumber evidence="5">1.1.1.19</ecNumber>
    </alternativeName>
    <alternativeName>
        <fullName evidence="11">Glucuronolactone reductase</fullName>
        <ecNumber evidence="5">1.1.1.20</ecNumber>
    </alternativeName>
    <alternativeName>
        <fullName evidence="14">S-nitroso-CoA reductase</fullName>
        <shortName evidence="14">ScorR</shortName>
        <ecNumber evidence="2">1.6.-.-</ecNumber>
    </alternativeName>
</protein>
<evidence type="ECO:0000250" key="1">
    <source>
        <dbReference type="UniProtKB" id="O60218"/>
    </source>
</evidence>
<evidence type="ECO:0000250" key="2">
    <source>
        <dbReference type="UniProtKB" id="P14550"/>
    </source>
</evidence>
<evidence type="ECO:0000250" key="3">
    <source>
        <dbReference type="UniProtKB" id="P50578"/>
    </source>
</evidence>
<evidence type="ECO:0000250" key="4">
    <source>
        <dbReference type="UniProtKB" id="Q9JII6"/>
    </source>
</evidence>
<evidence type="ECO:0000269" key="5">
    <source>
    </source>
</evidence>
<evidence type="ECO:0000269" key="6">
    <source>
    </source>
</evidence>
<evidence type="ECO:0000269" key="7">
    <source>
    </source>
</evidence>
<evidence type="ECO:0000269" key="8">
    <source>
    </source>
</evidence>
<evidence type="ECO:0000269" key="9">
    <source>
    </source>
</evidence>
<evidence type="ECO:0000269" key="10">
    <source ref="6"/>
</evidence>
<evidence type="ECO:0000303" key="11">
    <source>
    </source>
</evidence>
<evidence type="ECO:0000303" key="12">
    <source>
    </source>
</evidence>
<evidence type="ECO:0000303" key="13">
    <source>
    </source>
</evidence>
<evidence type="ECO:0000305" key="14"/>
<evidence type="ECO:0007744" key="15">
    <source>
    </source>
</evidence>
<keyword id="KW-0007">Acetylation</keyword>
<keyword id="KW-1003">Cell membrane</keyword>
<keyword id="KW-0963">Cytoplasm</keyword>
<keyword id="KW-0903">Direct protein sequencing</keyword>
<keyword id="KW-0971">Glycation</keyword>
<keyword id="KW-0325">Glycoprotein</keyword>
<keyword id="KW-0443">Lipid metabolism</keyword>
<keyword id="KW-0472">Membrane</keyword>
<keyword id="KW-0521">NADP</keyword>
<keyword id="KW-0560">Oxidoreductase</keyword>
<keyword id="KW-0597">Phosphoprotein</keyword>
<keyword id="KW-1185">Reference proteome</keyword>
<accession>P51635</accession>
<gene>
    <name type="primary">Akr1a1</name>
    <name type="synonym">Alr</name>
</gene>
<comment type="function">
    <text evidence="2 3 5 6 9">Catalyzes the NADPH-dependent reduction of a wide variety of carbonyl-containing compounds to their corresponding alcohols. Displays enzymatic activity towards endogenous metabolites such as aromatic and aliphatic aldehydes, ketones, monosaccharides and bile acids (PubMed:22820017, PubMed:25152401). Plays an important role in ascorbic acid biosynthesis by catalyzing the reduction of D-glucuronic acid and D-glucurono-gamma-lactone (PubMed:22820017). Functions as a detoxifiying enzyme by reducing a range of toxic aldehydes. Reduces methylglyoxal and 3-deoxyglucosone, which are present at elevated levels under hyperglycemic conditions and are cytotoxic (PubMed:25152401, PubMed:8500767). Involved also in the detoxification of lipid-derived aldehydes like acrolein (PubMed:25152401). Plays a role in the activation of procarcinogens, such as polycyclic aromatic hydrocarbon trans-dihydrodiols, and in the metabolism of various xenobiotics and drugs (By similarity). Also acts as an inhibitor of protein S-nitrosylation by mediating degradation of S-nitroso-coenzyme A (S-nitroso-CoA), a cofactor required to S-nitrosylate proteins (By similarity). S-nitroso-CoA reductase activity is involved in reprogramming intermediary metabolism in renal proximal tubules, notably by inhibiting protein S-nitrosylation of isoform 2 of PKM (PKM2) (By similarity). Also acts as a S-nitroso-glutathione reductase by catalyzing the NADPH-dependent reduction of S-nitrosoglutathione (By similarity). Displays no reductase activity towards retinoids (By similarity).</text>
</comment>
<comment type="catalytic activity">
    <reaction evidence="9">
        <text>a primary alcohol + NADP(+) = an aldehyde + NADPH + H(+)</text>
        <dbReference type="Rhea" id="RHEA:15937"/>
        <dbReference type="ChEBI" id="CHEBI:15378"/>
        <dbReference type="ChEBI" id="CHEBI:15734"/>
        <dbReference type="ChEBI" id="CHEBI:17478"/>
        <dbReference type="ChEBI" id="CHEBI:57783"/>
        <dbReference type="ChEBI" id="CHEBI:58349"/>
        <dbReference type="EC" id="1.1.1.2"/>
    </reaction>
</comment>
<comment type="catalytic activity">
    <reaction evidence="5">
        <text>L-gulonate + NADP(+) = aldehydo-D-glucuronate + NADPH + H(+)</text>
        <dbReference type="Rhea" id="RHEA:14909"/>
        <dbReference type="ChEBI" id="CHEBI:13115"/>
        <dbReference type="ChEBI" id="CHEBI:15378"/>
        <dbReference type="ChEBI" id="CHEBI:57783"/>
        <dbReference type="ChEBI" id="CHEBI:58349"/>
        <dbReference type="ChEBI" id="CHEBI:142686"/>
        <dbReference type="EC" id="1.1.1.19"/>
    </reaction>
</comment>
<comment type="catalytic activity">
    <reaction evidence="5">
        <text>L-gulono-1,4-lactone + NADP(+) = D-glucurono-3,6-lactone + NADPH + H(+)</text>
        <dbReference type="Rhea" id="RHEA:18925"/>
        <dbReference type="ChEBI" id="CHEBI:15378"/>
        <dbReference type="ChEBI" id="CHEBI:17587"/>
        <dbReference type="ChEBI" id="CHEBI:18268"/>
        <dbReference type="ChEBI" id="CHEBI:57783"/>
        <dbReference type="ChEBI" id="CHEBI:58349"/>
        <dbReference type="EC" id="1.1.1.20"/>
    </reaction>
</comment>
<comment type="catalytic activity">
    <reaction evidence="6">
        <text>allyl alcohol + NADP(+) = acrolein + NADPH + H(+)</text>
        <dbReference type="Rhea" id="RHEA:12168"/>
        <dbReference type="ChEBI" id="CHEBI:15368"/>
        <dbReference type="ChEBI" id="CHEBI:15378"/>
        <dbReference type="ChEBI" id="CHEBI:16605"/>
        <dbReference type="ChEBI" id="CHEBI:57783"/>
        <dbReference type="ChEBI" id="CHEBI:58349"/>
        <dbReference type="EC" id="1.1.1.54"/>
    </reaction>
</comment>
<comment type="catalytic activity">
    <reaction evidence="5">
        <text>glycerol + NADP(+) = D-glyceraldehyde + NADPH + H(+)</text>
        <dbReference type="Rhea" id="RHEA:23592"/>
        <dbReference type="ChEBI" id="CHEBI:15378"/>
        <dbReference type="ChEBI" id="CHEBI:17378"/>
        <dbReference type="ChEBI" id="CHEBI:17754"/>
        <dbReference type="ChEBI" id="CHEBI:57783"/>
        <dbReference type="ChEBI" id="CHEBI:58349"/>
        <dbReference type="EC" id="1.1.1.372"/>
    </reaction>
</comment>
<comment type="catalytic activity">
    <reaction evidence="5">
        <text>glycerol + NADP(+) = L-glyceraldehyde + NADPH + H(+)</text>
        <dbReference type="Rhea" id="RHEA:38111"/>
        <dbReference type="ChEBI" id="CHEBI:15378"/>
        <dbReference type="ChEBI" id="CHEBI:17754"/>
        <dbReference type="ChEBI" id="CHEBI:27975"/>
        <dbReference type="ChEBI" id="CHEBI:57783"/>
        <dbReference type="ChEBI" id="CHEBI:58349"/>
        <dbReference type="EC" id="1.1.1.372"/>
    </reaction>
</comment>
<comment type="catalytic activity">
    <reaction evidence="5">
        <text>hydroxyacetone + NADP(+) = methylglyoxal + NADPH + H(+)</text>
        <dbReference type="Rhea" id="RHEA:27986"/>
        <dbReference type="ChEBI" id="CHEBI:15378"/>
        <dbReference type="ChEBI" id="CHEBI:17158"/>
        <dbReference type="ChEBI" id="CHEBI:27957"/>
        <dbReference type="ChEBI" id="CHEBI:57783"/>
        <dbReference type="ChEBI" id="CHEBI:58349"/>
    </reaction>
</comment>
<comment type="catalytic activity">
    <reaction evidence="5 9">
        <text>3-deoxyfructose + NADP(+) = 3-deoxyglucosone + NADPH + H(+)</text>
        <dbReference type="Rhea" id="RHEA:58668"/>
        <dbReference type="ChEBI" id="CHEBI:15378"/>
        <dbReference type="ChEBI" id="CHEBI:57783"/>
        <dbReference type="ChEBI" id="CHEBI:58349"/>
        <dbReference type="ChEBI" id="CHEBI:60777"/>
        <dbReference type="ChEBI" id="CHEBI:142685"/>
    </reaction>
</comment>
<comment type="catalytic activity">
    <reaction evidence="7">
        <text>(R)-mevalonate + NADP(+) = (R)-mevaldate + NADPH + H(+)</text>
        <dbReference type="Rhea" id="RHEA:20193"/>
        <dbReference type="ChEBI" id="CHEBI:15378"/>
        <dbReference type="ChEBI" id="CHEBI:36464"/>
        <dbReference type="ChEBI" id="CHEBI:57783"/>
        <dbReference type="ChEBI" id="CHEBI:58349"/>
        <dbReference type="ChEBI" id="CHEBI:195523"/>
    </reaction>
</comment>
<comment type="catalytic activity">
    <reaction evidence="9">
        <text>pyridine 3-methanol + NADP(+) = pyridine-3-carbaldehyde + NADPH + H(+)</text>
        <dbReference type="Rhea" id="RHEA:58776"/>
        <dbReference type="ChEBI" id="CHEBI:15378"/>
        <dbReference type="ChEBI" id="CHEBI:28345"/>
        <dbReference type="ChEBI" id="CHEBI:45213"/>
        <dbReference type="ChEBI" id="CHEBI:57783"/>
        <dbReference type="ChEBI" id="CHEBI:58349"/>
    </reaction>
</comment>
<comment type="catalytic activity">
    <reaction evidence="2">
        <text>S-nitroso-CoA + NADPH + H(+) = sulfinamide-CoA + NADP(+)</text>
        <dbReference type="Rhea" id="RHEA:78375"/>
        <dbReference type="ChEBI" id="CHEBI:15378"/>
        <dbReference type="ChEBI" id="CHEBI:57783"/>
        <dbReference type="ChEBI" id="CHEBI:58349"/>
        <dbReference type="ChEBI" id="CHEBI:145546"/>
        <dbReference type="ChEBI" id="CHEBI:145548"/>
    </reaction>
    <physiologicalReaction direction="left-to-right" evidence="2">
        <dbReference type="Rhea" id="RHEA:78376"/>
    </physiologicalReaction>
</comment>
<comment type="catalytic activity">
    <reaction evidence="4">
        <text>S-nitrosoglutathione + NADPH + H(+) = S-(hydroxysulfenamide)glutathione + NADP(+)</text>
        <dbReference type="Rhea" id="RHEA:63500"/>
        <dbReference type="ChEBI" id="CHEBI:15378"/>
        <dbReference type="ChEBI" id="CHEBI:57783"/>
        <dbReference type="ChEBI" id="CHEBI:58349"/>
        <dbReference type="ChEBI" id="CHEBI:145544"/>
        <dbReference type="ChEBI" id="CHEBI:229723"/>
    </reaction>
</comment>
<comment type="biophysicochemical properties">
    <kinetics>
        <KM evidence="5">2.9 mM for D,L glyceraldehyde</KM>
        <KM evidence="5">1.8 mM for D-glucuronic acid</KM>
        <KM evidence="5">0.31 mM for methylglyoxal</KM>
        <KM evidence="5">0.63 mM for 3-deoxyglucosone</KM>
        <KM evidence="5">11 mM for D-glucurono-gamma-lactone</KM>
        <KM evidence="6">2.4 mM for acrolein</KM>
        <KM evidence="7">0.26 mM for mevaldate</KM>
        <text evidence="5">kcat is 3.0 sec(-1) for D,L glyceraldehyde as substrate (PubMed:22820017). kcat is 3.0 sec(-1) for methylglyoxal as substrate (PubMed:22820017). kcat is 3.4 sec(-1) for 3-deoxyglucosone as substrate (PubMed:22820017). kcat is 3.1 sec(-1) for D-glucuronic acid as substrate (PubMed:22820017). kcat is 3.7 sec(-1) for D-glucurono-gamma-lactone acid as substrate (PubMed:22820017).</text>
    </kinetics>
</comment>
<comment type="subunit">
    <text evidence="3">Monomer.</text>
</comment>
<comment type="subcellular location">
    <subcellularLocation>
        <location evidence="4">Cytoplasm</location>
        <location evidence="4">Cytosol</location>
    </subcellularLocation>
    <subcellularLocation>
        <location evidence="4">Apical cell membrane</location>
    </subcellularLocation>
</comment>
<comment type="tissue specificity">
    <text evidence="9">Widely expressed.</text>
</comment>
<comment type="similarity">
    <text evidence="14">Belongs to the aldo/keto reductase family.</text>
</comment>
<organism>
    <name type="scientific">Rattus norvegicus</name>
    <name type="common">Rat</name>
    <dbReference type="NCBI Taxonomy" id="10116"/>
    <lineage>
        <taxon>Eukaryota</taxon>
        <taxon>Metazoa</taxon>
        <taxon>Chordata</taxon>
        <taxon>Craniata</taxon>
        <taxon>Vertebrata</taxon>
        <taxon>Euteleostomi</taxon>
        <taxon>Mammalia</taxon>
        <taxon>Eutheria</taxon>
        <taxon>Euarchontoglires</taxon>
        <taxon>Glires</taxon>
        <taxon>Rodentia</taxon>
        <taxon>Myomorpha</taxon>
        <taxon>Muroidea</taxon>
        <taxon>Muridae</taxon>
        <taxon>Murinae</taxon>
        <taxon>Rattus</taxon>
    </lineage>
</organism>
<dbReference type="EC" id="1.1.1.2" evidence="5 7 9"/>
<dbReference type="EC" id="1.1.1.372" evidence="5"/>
<dbReference type="EC" id="1.1.1.54" evidence="6"/>
<dbReference type="EC" id="1.1.1.19" evidence="5"/>
<dbReference type="EC" id="1.1.1.20" evidence="5"/>
<dbReference type="EC" id="1.6.-.-" evidence="2"/>
<dbReference type="EMBL" id="D10854">
    <property type="protein sequence ID" value="BAA01627.1"/>
    <property type="molecule type" value="mRNA"/>
</dbReference>
<dbReference type="EMBL" id="BC059133">
    <property type="protein sequence ID" value="AAH59133.1"/>
    <property type="molecule type" value="mRNA"/>
</dbReference>
<dbReference type="PIR" id="JN0629">
    <property type="entry name" value="JN0629"/>
</dbReference>
<dbReference type="RefSeq" id="NP_112262.1">
    <property type="nucleotide sequence ID" value="NM_031000.3"/>
</dbReference>
<dbReference type="RefSeq" id="XP_038966744.1">
    <property type="nucleotide sequence ID" value="XM_039110816.2"/>
</dbReference>
<dbReference type="SMR" id="P51635"/>
<dbReference type="FunCoup" id="P51635">
    <property type="interactions" value="2016"/>
</dbReference>
<dbReference type="IntAct" id="P51635">
    <property type="interactions" value="1"/>
</dbReference>
<dbReference type="STRING" id="10116.ENSRNOP00000023072"/>
<dbReference type="BindingDB" id="P51635"/>
<dbReference type="ChEMBL" id="CHEMBL3871"/>
<dbReference type="DrugCentral" id="P51635"/>
<dbReference type="GlyCosmos" id="P51635">
    <property type="glycosylation" value="5 sites, No reported glycans"/>
</dbReference>
<dbReference type="iPTMnet" id="P51635"/>
<dbReference type="PhosphoSitePlus" id="P51635"/>
<dbReference type="SwissPalm" id="P51635"/>
<dbReference type="jPOST" id="P51635"/>
<dbReference type="PaxDb" id="10116-ENSRNOP00000023072"/>
<dbReference type="Ensembl" id="ENSRNOT00000023072.6">
    <property type="protein sequence ID" value="ENSRNOP00000023072.3"/>
    <property type="gene ID" value="ENSRNOG00000016727.6"/>
</dbReference>
<dbReference type="GeneID" id="78959"/>
<dbReference type="KEGG" id="rno:78959"/>
<dbReference type="UCSC" id="RGD:68346">
    <property type="organism name" value="rat"/>
</dbReference>
<dbReference type="AGR" id="RGD:68346"/>
<dbReference type="CTD" id="10327"/>
<dbReference type="RGD" id="68346">
    <property type="gene designation" value="Akr1a1"/>
</dbReference>
<dbReference type="eggNOG" id="KOG1577">
    <property type="taxonomic scope" value="Eukaryota"/>
</dbReference>
<dbReference type="GeneTree" id="ENSGT00940000156539"/>
<dbReference type="HOGENOM" id="CLU_023205_0_0_1"/>
<dbReference type="InParanoid" id="P51635"/>
<dbReference type="OMA" id="MVNQIFL"/>
<dbReference type="OrthoDB" id="416253at2759"/>
<dbReference type="PhylomeDB" id="P51635"/>
<dbReference type="TreeFam" id="TF106492"/>
<dbReference type="BRENDA" id="1.1.1.2">
    <property type="organism ID" value="5301"/>
</dbReference>
<dbReference type="Reactome" id="R-RNO-156590">
    <property type="pathway name" value="Glutathione conjugation"/>
</dbReference>
<dbReference type="Reactome" id="R-RNO-5661270">
    <property type="pathway name" value="Formation of xylulose-5-phosphate"/>
</dbReference>
<dbReference type="SABIO-RK" id="P51635"/>
<dbReference type="PRO" id="PR:P51635"/>
<dbReference type="Proteomes" id="UP000002494">
    <property type="component" value="Chromosome 5"/>
</dbReference>
<dbReference type="Bgee" id="ENSRNOG00000016727">
    <property type="expression patterns" value="Expressed in adult mammalian kidney and 19 other cell types or tissues"/>
</dbReference>
<dbReference type="GO" id="GO:0016324">
    <property type="term" value="C:apical plasma membrane"/>
    <property type="evidence" value="ECO:0000250"/>
    <property type="project" value="UniProtKB"/>
</dbReference>
<dbReference type="GO" id="GO:0005829">
    <property type="term" value="C:cytosol"/>
    <property type="evidence" value="ECO:0000250"/>
    <property type="project" value="UniProtKB"/>
</dbReference>
<dbReference type="GO" id="GO:0045202">
    <property type="term" value="C:synapse"/>
    <property type="evidence" value="ECO:0000266"/>
    <property type="project" value="RGD"/>
</dbReference>
<dbReference type="GO" id="GO:0004032">
    <property type="term" value="F:aldose reductase (NADPH) activity"/>
    <property type="evidence" value="ECO:0000266"/>
    <property type="project" value="RGD"/>
</dbReference>
<dbReference type="GO" id="GO:0047655">
    <property type="term" value="F:allyl-alcohol dehydrogenase activity"/>
    <property type="evidence" value="ECO:0007669"/>
    <property type="project" value="UniProtKB-EC"/>
</dbReference>
<dbReference type="GO" id="GO:0047941">
    <property type="term" value="F:glucuronolactone reductase activity"/>
    <property type="evidence" value="ECO:0000314"/>
    <property type="project" value="UniProtKB"/>
</dbReference>
<dbReference type="GO" id="GO:0047956">
    <property type="term" value="F:glycerol dehydrogenase (NADP+) activity"/>
    <property type="evidence" value="ECO:0007669"/>
    <property type="project" value="RHEA"/>
</dbReference>
<dbReference type="GO" id="GO:0047939">
    <property type="term" value="F:L-glucuronate reductase activity"/>
    <property type="evidence" value="ECO:0000314"/>
    <property type="project" value="UniProtKB"/>
</dbReference>
<dbReference type="GO" id="GO:1990002">
    <property type="term" value="F:methylglyoxal reductase (NADPH) (acetol producing) activity"/>
    <property type="evidence" value="ECO:0007669"/>
    <property type="project" value="RHEA"/>
</dbReference>
<dbReference type="GO" id="GO:0080007">
    <property type="term" value="F:S-nitrosoglutathione reductase (NADH) activity"/>
    <property type="evidence" value="ECO:0000266"/>
    <property type="project" value="RGD"/>
</dbReference>
<dbReference type="GO" id="GO:0160163">
    <property type="term" value="F:S-nitrosoglutathione reductase (NADPH) activity"/>
    <property type="evidence" value="ECO:0007669"/>
    <property type="project" value="RHEA"/>
</dbReference>
<dbReference type="GO" id="GO:0046185">
    <property type="term" value="P:aldehyde catabolic process"/>
    <property type="evidence" value="ECO:0000266"/>
    <property type="project" value="RGD"/>
</dbReference>
<dbReference type="GO" id="GO:0110095">
    <property type="term" value="P:cellular detoxification of aldehyde"/>
    <property type="evidence" value="ECO:0000314"/>
    <property type="project" value="UniProtKB"/>
</dbReference>
<dbReference type="GO" id="GO:0042840">
    <property type="term" value="P:D-glucuronate catabolic process"/>
    <property type="evidence" value="ECO:0000315"/>
    <property type="project" value="UniProtKB"/>
</dbReference>
<dbReference type="GO" id="GO:0019640">
    <property type="term" value="P:D-glucuronate catabolic process to D-xylulose 5-phosphate"/>
    <property type="evidence" value="ECO:0000266"/>
    <property type="project" value="RGD"/>
</dbReference>
<dbReference type="GO" id="GO:0044597">
    <property type="term" value="P:daunorubicin metabolic process"/>
    <property type="evidence" value="ECO:0000266"/>
    <property type="project" value="RGD"/>
</dbReference>
<dbReference type="GO" id="GO:0044598">
    <property type="term" value="P:doxorubicin metabolic process"/>
    <property type="evidence" value="ECO:0000266"/>
    <property type="project" value="RGD"/>
</dbReference>
<dbReference type="GO" id="GO:0019853">
    <property type="term" value="P:L-ascorbic acid biosynthetic process"/>
    <property type="evidence" value="ECO:0000315"/>
    <property type="project" value="UniProtKB"/>
</dbReference>
<dbReference type="GO" id="GO:0006629">
    <property type="term" value="P:lipid metabolic process"/>
    <property type="evidence" value="ECO:0007669"/>
    <property type="project" value="UniProtKB-KW"/>
</dbReference>
<dbReference type="GO" id="GO:0043066">
    <property type="term" value="P:negative regulation of apoptotic process"/>
    <property type="evidence" value="ECO:0000314"/>
    <property type="project" value="RGD"/>
</dbReference>
<dbReference type="CDD" id="cd19106">
    <property type="entry name" value="AKR_AKR1A1-4"/>
    <property type="match status" value="1"/>
</dbReference>
<dbReference type="FunFam" id="3.20.20.100:FF:000006">
    <property type="entry name" value="Aldo-keto reductase family 1 member A1"/>
    <property type="match status" value="1"/>
</dbReference>
<dbReference type="Gene3D" id="3.20.20.100">
    <property type="entry name" value="NADP-dependent oxidoreductase domain"/>
    <property type="match status" value="1"/>
</dbReference>
<dbReference type="InterPro" id="IPR020471">
    <property type="entry name" value="AKR"/>
</dbReference>
<dbReference type="InterPro" id="IPR044481">
    <property type="entry name" value="AKR1A"/>
</dbReference>
<dbReference type="InterPro" id="IPR018170">
    <property type="entry name" value="Aldo/ket_reductase_CS"/>
</dbReference>
<dbReference type="InterPro" id="IPR023210">
    <property type="entry name" value="NADP_OxRdtase_dom"/>
</dbReference>
<dbReference type="InterPro" id="IPR036812">
    <property type="entry name" value="NADP_OxRdtase_dom_sf"/>
</dbReference>
<dbReference type="PANTHER" id="PTHR11732">
    <property type="entry name" value="ALDO/KETO REDUCTASE"/>
    <property type="match status" value="1"/>
</dbReference>
<dbReference type="Pfam" id="PF00248">
    <property type="entry name" value="Aldo_ket_red"/>
    <property type="match status" value="1"/>
</dbReference>
<dbReference type="PIRSF" id="PIRSF000097">
    <property type="entry name" value="AKR"/>
    <property type="match status" value="1"/>
</dbReference>
<dbReference type="PRINTS" id="PR00069">
    <property type="entry name" value="ALDKETRDTASE"/>
</dbReference>
<dbReference type="SUPFAM" id="SSF51430">
    <property type="entry name" value="NAD(P)-linked oxidoreductase"/>
    <property type="match status" value="1"/>
</dbReference>
<dbReference type="PROSITE" id="PS00798">
    <property type="entry name" value="ALDOKETO_REDUCTASE_1"/>
    <property type="match status" value="1"/>
</dbReference>
<dbReference type="PROSITE" id="PS00062">
    <property type="entry name" value="ALDOKETO_REDUCTASE_2"/>
    <property type="match status" value="1"/>
</dbReference>
<dbReference type="PROSITE" id="PS00063">
    <property type="entry name" value="ALDOKETO_REDUCTASE_3"/>
    <property type="match status" value="1"/>
</dbReference>
<feature type="initiator methionine" description="Removed" evidence="10">
    <location>
        <position position="1"/>
    </location>
</feature>
<feature type="chain" id="PRO_0000124620" description="Aldo-keto reductase family 1 member A1">
    <location>
        <begin position="2"/>
        <end position="325"/>
    </location>
</feature>
<feature type="active site" description="Proton donor" evidence="2">
    <location>
        <position position="50"/>
    </location>
</feature>
<feature type="binding site" evidence="1">
    <location>
        <begin position="11"/>
        <end position="20"/>
    </location>
    <ligand>
        <name>NADP(+)</name>
        <dbReference type="ChEBI" id="CHEBI:58349"/>
    </ligand>
</feature>
<feature type="binding site" evidence="3">
    <location>
        <position position="21"/>
    </location>
    <ligand>
        <name>NADP(+)</name>
        <dbReference type="ChEBI" id="CHEBI:58349"/>
    </ligand>
</feature>
<feature type="binding site" evidence="3">
    <location>
        <position position="22"/>
    </location>
    <ligand>
        <name>NADP(+)</name>
        <dbReference type="ChEBI" id="CHEBI:58349"/>
    </ligand>
</feature>
<feature type="binding site" evidence="3">
    <location>
        <position position="45"/>
    </location>
    <ligand>
        <name>NADP(+)</name>
        <dbReference type="ChEBI" id="CHEBI:58349"/>
    </ligand>
</feature>
<feature type="binding site" evidence="3">
    <location>
        <position position="162"/>
    </location>
    <ligand>
        <name>NADP(+)</name>
        <dbReference type="ChEBI" id="CHEBI:58349"/>
    </ligand>
</feature>
<feature type="binding site" evidence="3">
    <location>
        <position position="163"/>
    </location>
    <ligand>
        <name>NADP(+)</name>
        <dbReference type="ChEBI" id="CHEBI:58349"/>
    </ligand>
</feature>
<feature type="binding site" evidence="3">
    <location>
        <position position="211"/>
    </location>
    <ligand>
        <name>NADP(+)</name>
        <dbReference type="ChEBI" id="CHEBI:58349"/>
    </ligand>
</feature>
<feature type="binding site" evidence="3">
    <location>
        <position position="213"/>
    </location>
    <ligand>
        <name>NADP(+)</name>
        <dbReference type="ChEBI" id="CHEBI:58349"/>
    </ligand>
</feature>
<feature type="binding site" evidence="3">
    <location>
        <position position="215"/>
    </location>
    <ligand>
        <name>NADP(+)</name>
        <dbReference type="ChEBI" id="CHEBI:58349"/>
    </ligand>
</feature>
<feature type="binding site" evidence="3">
    <location>
        <position position="216"/>
    </location>
    <ligand>
        <name>NADP(+)</name>
        <dbReference type="ChEBI" id="CHEBI:58349"/>
    </ligand>
</feature>
<feature type="binding site" evidence="3">
    <location>
        <position position="263"/>
    </location>
    <ligand>
        <name>NADP(+)</name>
        <dbReference type="ChEBI" id="CHEBI:58349"/>
    </ligand>
</feature>
<feature type="binding site" evidence="3">
    <location>
        <position position="264"/>
    </location>
    <ligand>
        <name>NADP(+)</name>
        <dbReference type="ChEBI" id="CHEBI:58349"/>
    </ligand>
</feature>
<feature type="binding site" evidence="3">
    <location>
        <position position="265"/>
    </location>
    <ligand>
        <name>NADP(+)</name>
        <dbReference type="ChEBI" id="CHEBI:58349"/>
    </ligand>
</feature>
<feature type="binding site" evidence="3">
    <location>
        <position position="266"/>
    </location>
    <ligand>
        <name>NADP(+)</name>
        <dbReference type="ChEBI" id="CHEBI:58349"/>
    </ligand>
</feature>
<feature type="binding site" evidence="3">
    <location>
        <position position="269"/>
    </location>
    <ligand>
        <name>NADP(+)</name>
        <dbReference type="ChEBI" id="CHEBI:58349"/>
    </ligand>
</feature>
<feature type="binding site" evidence="3">
    <location>
        <position position="272"/>
    </location>
    <ligand>
        <name>NADP(+)</name>
        <dbReference type="ChEBI" id="CHEBI:58349"/>
    </ligand>
</feature>
<feature type="binding site" evidence="3">
    <location>
        <position position="273"/>
    </location>
    <ligand>
        <name>NADP(+)</name>
        <dbReference type="ChEBI" id="CHEBI:58349"/>
    </ligand>
</feature>
<feature type="site" description="Not glycated" evidence="8">
    <location>
        <position position="13"/>
    </location>
</feature>
<feature type="site" description="Not glycated" evidence="8">
    <location>
        <position position="30"/>
    </location>
</feature>
<feature type="site" description="Not glycated" evidence="8">
    <location>
        <position position="34"/>
    </location>
</feature>
<feature type="site" description="Not glycated" evidence="8">
    <location>
        <position position="61"/>
    </location>
</feature>
<feature type="site" description="Lowers pKa of active site Tyr" evidence="2">
    <location>
        <position position="80"/>
    </location>
</feature>
<feature type="site" description="Not glycated" evidence="8">
    <location>
        <position position="80"/>
    </location>
</feature>
<feature type="site" description="Not glycated" evidence="8">
    <location>
        <position position="97"/>
    </location>
</feature>
<feature type="site" description="Not glycated" evidence="8">
    <location>
        <position position="127"/>
    </location>
</feature>
<feature type="site" description="Not glycated" evidence="8">
    <location>
        <position position="134"/>
    </location>
</feature>
<feature type="site" description="Not glycated" evidence="8">
    <location>
        <position position="145"/>
    </location>
</feature>
<feature type="site" description="Not glycated" evidence="8">
    <location>
        <position position="157"/>
    </location>
</feature>
<feature type="site" description="Not glycated" evidence="8">
    <location>
        <position position="240"/>
    </location>
</feature>
<feature type="site" description="Not glycated" evidence="8">
    <location>
        <position position="257"/>
    </location>
</feature>
<feature type="site" description="Not glycated" evidence="8">
    <location>
        <position position="263"/>
    </location>
</feature>
<feature type="site" description="Not glycated" evidence="8">
    <location>
        <position position="287"/>
    </location>
</feature>
<feature type="site" description="Not glycated" evidence="8">
    <location>
        <position position="294"/>
    </location>
</feature>
<feature type="site" description="Not glycated" evidence="8">
    <location>
        <position position="308"/>
    </location>
</feature>
<feature type="modified residue" description="N-acetylthreonine" evidence="10">
    <location>
        <position position="2"/>
    </location>
</feature>
<feature type="modified residue" description="Phosphoserine" evidence="15">
    <location>
        <position position="4"/>
    </location>
</feature>
<feature type="modified residue" description="Phosphoserine" evidence="2">
    <location>
        <position position="38"/>
    </location>
</feature>
<feature type="modified residue" description="N6-acetyllysine; alternate" evidence="4">
    <location>
        <position position="127"/>
    </location>
</feature>
<feature type="modified residue" description="N6-succinyllysine; alternate" evidence="4">
    <location>
        <position position="127"/>
    </location>
</feature>
<feature type="modified residue" description="N6-succinyllysine" evidence="4">
    <location>
        <position position="145"/>
    </location>
</feature>
<feature type="modified residue" description="Phosphoserine" evidence="2">
    <location>
        <position position="211"/>
    </location>
</feature>
<feature type="glycosylation site" description="N-linked (Glc) (glycation) lysine" evidence="8">
    <location>
        <position position="23"/>
    </location>
</feature>
<feature type="glycosylation site" description="N-linked (Glc) (glycation) lysine" evidence="8">
    <location>
        <position position="68"/>
    </location>
</feature>
<feature type="glycosylation site" description="N-linked (Glc) (glycation) lysine" evidence="8">
    <location>
        <position position="85"/>
    </location>
</feature>
<feature type="glycosylation site" description="N-linked (Glc) (glycation) lysine" evidence="8">
    <location>
        <position position="141"/>
    </location>
</feature>
<feature type="glycosylation site" description="N-linked (Glc) (glycation) lysine" evidence="8">
    <location>
        <position position="153"/>
    </location>
</feature>
<name>AK1A1_RAT</name>
<sequence>MTASSVLLHTGQKMPLIGLGTWKSEPGQVKAAIKYALSVGYRHIDCASVYGNETEIGEALKESVGAGKAVPREELFVTSKLWNTKHHPEDVEPAVRKTLADLQLEYLDLYLMHWPYAFERGDNPFPKNADGTVKYDSTHYKETWKALEALVAKGLVKALGLSNFSSRQIDDVLSVASVRPAVLQVECHPYLAQNELIAHCQARGLEVTAYSPLGSSDRAWRHPDEPVLLEEPVVLALAEKHGRSPAQILLRWQVQRKVICIPKSITPSRILQNIQVFDFTFSPEEMKQLDALNKNWRYIVPMITVDGKRVPRDAGHPLYPFNDPY</sequence>
<reference key="1">
    <citation type="journal article" date="1993" name="Gene">
        <title>Identity of a major 3-deoxyglucosone-reducing enzyme with aldehyde reductase in rat liver established by amino acid sequencing and cDNA expression.</title>
        <authorList>
            <person name="Takahashi M."/>
            <person name="Fujii J."/>
            <person name="Teshima T."/>
            <person name="Suzuki K."/>
            <person name="Shiba T."/>
            <person name="Taniguchi N."/>
        </authorList>
    </citation>
    <scope>NUCLEOTIDE SEQUENCE [MRNA]</scope>
    <scope>PARTIAL PROTEIN SEQUENCE</scope>
    <scope>TISSUE SPECIFICITY</scope>
    <scope>FUNCTION</scope>
    <scope>CATALYTIC ACTIVITY</scope>
    <source>
        <tissue>Kidney</tissue>
        <tissue>Liver</tissue>
    </source>
</reference>
<reference key="2">
    <citation type="journal article" date="2004" name="Genome Res.">
        <title>The status, quality, and expansion of the NIH full-length cDNA project: the Mammalian Gene Collection (MGC).</title>
        <authorList>
            <consortium name="The MGC Project Team"/>
        </authorList>
    </citation>
    <scope>NUCLEOTIDE SEQUENCE [LARGE SCALE MRNA]</scope>
    <source>
        <tissue>Pituitary</tissue>
    </source>
</reference>
<reference key="3">
    <citation type="journal article" date="1995" name="Biochemistry">
        <title>In vivo glycation of aldehyde reductase, a major 3-deoxyglucosone reducing enzyme: identification of glycation sites.</title>
        <authorList>
            <person name="Takahashi M."/>
            <person name="Lu Y.B."/>
            <person name="Myint T."/>
            <person name="Fujii J."/>
            <person name="Wada Y."/>
            <person name="Taniguchi N."/>
        </authorList>
    </citation>
    <scope>PROTEIN SEQUENCE OF 14-30; 62-77; 81-97; 135-145 AND 146-157</scope>
    <scope>GLYCATION AT LYS-23; LYS-68; LYS-85; LYS-141 AND LYS-153</scope>
    <scope>ABSENCE OF GLYCATION AT LYS-13; LYS-30; LYS-34; LYS-61; LYS-80; LYS-97; LYS-127; LYS-134; LYS-145; LYS-157; LYS-240; LYS-257; LYS-263; LYS-287; LYS-294 AND LYS-308</scope>
</reference>
<reference key="4">
    <citation type="submission" date="2006-11" db="UniProtKB">
        <authorList>
            <person name="Lubec G."/>
            <person name="Afjehi-Sadat L."/>
        </authorList>
    </citation>
    <scope>PROTEIN SEQUENCE OF 204-218; 222-240; 270-287 AND 313-325</scope>
    <scope>IDENTIFICATION BY MASS SPECTROMETRY</scope>
    <source>
        <strain>Sprague-Dawley</strain>
        <tissue>Spinal cord</tissue>
    </source>
</reference>
<reference key="5">
    <citation type="journal article" date="1974" name="Biochem. J.">
        <title>Some properties and a suggested reclassification of mevaldate reductase.</title>
        <authorList>
            <person name="Beedle A.S."/>
            <person name="Rees H.H."/>
            <person name="Goodwin T.W."/>
        </authorList>
    </citation>
    <scope>CATALYTIC ACTIVITY</scope>
    <scope>BIOPHYSICOCHEMICAL PROPERTIES</scope>
</reference>
<reference key="6">
    <citation type="submission" date="2007-02" db="UniProtKB">
        <authorList>
            <person name="Lubec G."/>
            <person name="Chen W.-Q."/>
        </authorList>
    </citation>
    <scope>ACETYLATION AT THR-2</scope>
    <scope>IDENTIFICATION BY MASS SPECTROMETRY</scope>
</reference>
<reference key="7">
    <citation type="journal article" date="2012" name="Biochim. Biophys. Acta">
        <title>In vivo role of aldehyde reductase.</title>
        <authorList>
            <person name="Takahashi M."/>
            <person name="Miyata S."/>
            <person name="Fujii J."/>
            <person name="Inai Y."/>
            <person name="Ueyama S."/>
            <person name="Araki M."/>
            <person name="Soga T."/>
            <person name="Fujinawa R."/>
            <person name="Nishitani C."/>
            <person name="Ariki S."/>
            <person name="Shimizu T."/>
            <person name="Abe T."/>
            <person name="Ihara Y."/>
            <person name="Nishikimi M."/>
            <person name="Kozutsumi Y."/>
            <person name="Taniguchi N."/>
            <person name="Kuroki Y."/>
        </authorList>
    </citation>
    <scope>CATALYTIC ACTIVITY</scope>
    <scope>BIOPHYSICOCHEMICAL PROPERTIES</scope>
    <scope>SUBSTRATE SPECIFICITY</scope>
    <scope>FUNCTION</scope>
</reference>
<reference key="8">
    <citation type="journal article" date="2012" name="Nat. Commun.">
        <title>Quantitative maps of protein phosphorylation sites across 14 different rat organs and tissues.</title>
        <authorList>
            <person name="Lundby A."/>
            <person name="Secher A."/>
            <person name="Lage K."/>
            <person name="Nordsborg N.B."/>
            <person name="Dmytriyev A."/>
            <person name="Lundby C."/>
            <person name="Olsen J.V."/>
        </authorList>
    </citation>
    <scope>PHOSPHORYLATION [LARGE SCALE ANALYSIS] AT SER-4</scope>
    <scope>IDENTIFICATION BY MASS SPECTROMETRY [LARGE SCALE ANALYSIS]</scope>
</reference>
<reference key="9">
    <citation type="journal article" date="2014" name="Biochem. Biophys. Res. Commun.">
        <title>Reductive detoxification of acrolein as a potential role for aldehyde reductase (AKR1A) in mammals.</title>
        <authorList>
            <person name="Kurahashi T."/>
            <person name="Kwon M."/>
            <person name="Homma T."/>
            <person name="Saito Y."/>
            <person name="Lee J."/>
            <person name="Takahashi M."/>
            <person name="Yamada K."/>
            <person name="Miyata S."/>
            <person name="Fujii J."/>
        </authorList>
    </citation>
    <scope>CATALYTIC ACTIVITY</scope>
    <scope>FUNCTION</scope>
</reference>